<dbReference type="EC" id="4.1.1.39"/>
<dbReference type="EMBL" id="L37437">
    <property type="protein sequence ID" value="AAA99178.2"/>
    <property type="molecule type" value="Genomic_DNA"/>
</dbReference>
<dbReference type="EMBL" id="CP000116">
    <property type="protein sequence ID" value="AAZ98591.1"/>
    <property type="molecule type" value="Genomic_DNA"/>
</dbReference>
<dbReference type="RefSeq" id="WP_011313150.1">
    <property type="nucleotide sequence ID" value="NC_007404.1"/>
</dbReference>
<dbReference type="SMR" id="Q60028"/>
<dbReference type="STRING" id="292415.Tbd_2638"/>
<dbReference type="KEGG" id="tbd:Tbd_2638"/>
<dbReference type="eggNOG" id="COG1850">
    <property type="taxonomic scope" value="Bacteria"/>
</dbReference>
<dbReference type="HOGENOM" id="CLU_031450_3_1_4"/>
<dbReference type="OrthoDB" id="9770811at2"/>
<dbReference type="Proteomes" id="UP000008291">
    <property type="component" value="Chromosome"/>
</dbReference>
<dbReference type="GO" id="GO:0000287">
    <property type="term" value="F:magnesium ion binding"/>
    <property type="evidence" value="ECO:0007669"/>
    <property type="project" value="InterPro"/>
</dbReference>
<dbReference type="GO" id="GO:0004497">
    <property type="term" value="F:monooxygenase activity"/>
    <property type="evidence" value="ECO:0007669"/>
    <property type="project" value="UniProtKB-KW"/>
</dbReference>
<dbReference type="GO" id="GO:0016984">
    <property type="term" value="F:ribulose-bisphosphate carboxylase activity"/>
    <property type="evidence" value="ECO:0007669"/>
    <property type="project" value="UniProtKB-EC"/>
</dbReference>
<dbReference type="GO" id="GO:0019253">
    <property type="term" value="P:reductive pentose-phosphate cycle"/>
    <property type="evidence" value="ECO:0007669"/>
    <property type="project" value="UniProtKB-KW"/>
</dbReference>
<dbReference type="CDD" id="cd08211">
    <property type="entry name" value="RuBisCO_large_II"/>
    <property type="match status" value="1"/>
</dbReference>
<dbReference type="Gene3D" id="3.20.20.110">
    <property type="entry name" value="Ribulose bisphosphate carboxylase, large subunit, C-terminal domain"/>
    <property type="match status" value="1"/>
</dbReference>
<dbReference type="Gene3D" id="3.30.70.150">
    <property type="entry name" value="RuBisCO large subunit, N-terminal domain"/>
    <property type="match status" value="1"/>
</dbReference>
<dbReference type="HAMAP" id="MF_01339">
    <property type="entry name" value="RuBisCO_L_type2"/>
    <property type="match status" value="1"/>
</dbReference>
<dbReference type="InterPro" id="IPR033966">
    <property type="entry name" value="RuBisCO"/>
</dbReference>
<dbReference type="InterPro" id="IPR020878">
    <property type="entry name" value="RuBisCo_large_chain_AS"/>
</dbReference>
<dbReference type="InterPro" id="IPR000685">
    <property type="entry name" value="RuBisCO_lsu_C"/>
</dbReference>
<dbReference type="InterPro" id="IPR036376">
    <property type="entry name" value="RuBisCO_lsu_C_sf"/>
</dbReference>
<dbReference type="InterPro" id="IPR017443">
    <property type="entry name" value="RuBisCO_lsu_fd_N"/>
</dbReference>
<dbReference type="InterPro" id="IPR036422">
    <property type="entry name" value="RuBisCO_lsu_N_sf"/>
</dbReference>
<dbReference type="InterPro" id="IPR020871">
    <property type="entry name" value="RuBisCO_lsuII"/>
</dbReference>
<dbReference type="NCBIfam" id="NF010002">
    <property type="entry name" value="PRK13475.1"/>
    <property type="match status" value="1"/>
</dbReference>
<dbReference type="PANTHER" id="PTHR42704">
    <property type="entry name" value="RIBULOSE BISPHOSPHATE CARBOXYLASE"/>
    <property type="match status" value="1"/>
</dbReference>
<dbReference type="PANTHER" id="PTHR42704:SF17">
    <property type="entry name" value="RIBULOSE BISPHOSPHATE CARBOXYLASE LARGE CHAIN"/>
    <property type="match status" value="1"/>
</dbReference>
<dbReference type="Pfam" id="PF00016">
    <property type="entry name" value="RuBisCO_large"/>
    <property type="match status" value="1"/>
</dbReference>
<dbReference type="Pfam" id="PF02788">
    <property type="entry name" value="RuBisCO_large_N"/>
    <property type="match status" value="1"/>
</dbReference>
<dbReference type="SUPFAM" id="SSF51649">
    <property type="entry name" value="RuBisCo, C-terminal domain"/>
    <property type="match status" value="1"/>
</dbReference>
<dbReference type="SUPFAM" id="SSF54966">
    <property type="entry name" value="RuBisCO, large subunit, small (N-terminal) domain"/>
    <property type="match status" value="1"/>
</dbReference>
<dbReference type="PROSITE" id="PS00157">
    <property type="entry name" value="RUBISCO_LARGE"/>
    <property type="match status" value="1"/>
</dbReference>
<proteinExistence type="evidence at protein level"/>
<sequence length="459" mass="50690">MDQSARYADLSLKEEDLIKGGRHILVAYKMKPKSGYGYLEAAAHFAAESSTGTNVEVSTTDDFTKGVDALVYYIDEASEDMRIAYPLELFDRNVTDGRFMLVSFLTLAIGNNQGMGDIEHAKMIDFYVPERCIQMFDGPATDISNLWRILGRPVVNGGYIAGTIIKPKLGLRPEPFAKAAYQFWLGGDFIKNDEPQGNQVFCPLKKVLPLVYDAMKRAQDDTGQAKLFSMNITADDHYEMCARADYALEVFGPDADKLAFLVDGYVGGPGMVTTARRQYPGQYLHYHRAGHGAVTSPSAKRGYTAFVLAKMSRLQGASGIHVGTMGYGKMEGEGDDKIIAYMIERDECQGPVYFQKWYGMKPTTPIISGGMNALRLPGFFENLGHGNVINTAGGGSYGHIDSPAAGAISLRQSYECWKQGADPIEFAKEHKEFARAFESFPKDADKLFPGWREKLGVHK</sequence>
<organism>
    <name type="scientific">Thiobacillus denitrificans (strain ATCC 25259 / T1)</name>
    <dbReference type="NCBI Taxonomy" id="292415"/>
    <lineage>
        <taxon>Bacteria</taxon>
        <taxon>Pseudomonadati</taxon>
        <taxon>Pseudomonadota</taxon>
        <taxon>Betaproteobacteria</taxon>
        <taxon>Nitrosomonadales</taxon>
        <taxon>Thiobacillaceae</taxon>
        <taxon>Thiobacillus</taxon>
    </lineage>
</organism>
<name>RBL2_THIDA</name>
<keyword id="KW-0113">Calvin cycle</keyword>
<keyword id="KW-0120">Carbon dioxide fixation</keyword>
<keyword id="KW-0456">Lyase</keyword>
<keyword id="KW-0460">Magnesium</keyword>
<keyword id="KW-0479">Metal-binding</keyword>
<keyword id="KW-0503">Monooxygenase</keyword>
<keyword id="KW-0560">Oxidoreductase</keyword>
<keyword id="KW-1185">Reference proteome</keyword>
<reference key="1">
    <citation type="journal article" date="1996" name="J. Bacteriol.">
        <title>Deduced amino acid sequence, functional expression, and unique enzymatic properties of the form I and form II ribulose bisphosphate carboxylase/oxygenase from the chemoautotrophic bacterium Thiobacillus denitrificans.</title>
        <authorList>
            <person name="Hernandez J.M."/>
            <person name="Baker S.H."/>
            <person name="Lorbach S.C."/>
            <person name="Shively J.M."/>
            <person name="Tabita F.R."/>
        </authorList>
    </citation>
    <scope>NUCLEOTIDE SEQUENCE [GENOMIC DNA]</scope>
    <scope>KINETIC PARAMETERS</scope>
    <scope>FUNCTION</scope>
</reference>
<reference key="2">
    <citation type="submission" date="2000-09" db="EMBL/GenBank/DDBJ databases">
        <authorList>
            <person name="Shively J.M."/>
        </authorList>
    </citation>
    <scope>SEQUENCE REVISION TO 83 AND C-TERMINUS</scope>
</reference>
<reference key="3">
    <citation type="journal article" date="2006" name="J. Bacteriol.">
        <title>The genome sequence of the obligately chemolithoautotrophic, facultatively anaerobic bacterium Thiobacillus denitrificans.</title>
        <authorList>
            <person name="Beller H.R."/>
            <person name="Chain P.S."/>
            <person name="Letain T.E."/>
            <person name="Chakicherla A."/>
            <person name="Larimer F.W."/>
            <person name="Richardson P.M."/>
            <person name="Coleman M.A."/>
            <person name="Wood A.P."/>
            <person name="Kelly D.P."/>
        </authorList>
    </citation>
    <scope>NUCLEOTIDE SEQUENCE [LARGE SCALE GENOMIC DNA]</scope>
    <source>
        <strain>ATCC 25259 / T1</strain>
    </source>
</reference>
<reference key="4">
    <citation type="journal article" date="1972" name="J. Bacteriol.">
        <title>Ribulose diphosphate carboxylase from autotrophic microorganisms.</title>
        <authorList>
            <person name="McFadden B.A."/>
            <person name="Denend A.R."/>
        </authorList>
    </citation>
    <scope>SUBUNIT</scope>
</reference>
<protein>
    <recommendedName>
        <fullName>Ribulose bisphosphate carboxylase</fullName>
        <shortName>RuBisCO</shortName>
        <ecNumber>4.1.1.39</ecNumber>
    </recommendedName>
</protein>
<evidence type="ECO:0000250" key="1"/>
<evidence type="ECO:0000269" key="2">
    <source>
    </source>
</evidence>
<evidence type="ECO:0000269" key="3">
    <source>
    </source>
</evidence>
<evidence type="ECO:0000305" key="4"/>
<gene>
    <name type="primary">cbbM</name>
    <name type="synonym">cbbL2</name>
    <name type="ordered locus">Tbd_2638</name>
</gene>
<feature type="chain" id="PRO_0000062668" description="Ribulose bisphosphate carboxylase">
    <location>
        <begin position="1"/>
        <end position="459"/>
    </location>
</feature>
<feature type="active site" description="Proton acceptor" evidence="1">
    <location>
        <position position="166"/>
    </location>
</feature>
<feature type="active site" description="Proton acceptor" evidence="1">
    <location>
        <position position="287"/>
    </location>
</feature>
<feature type="binding site" description="in homodimeric partner" evidence="1">
    <location>
        <position position="111"/>
    </location>
    <ligand>
        <name>substrate</name>
    </ligand>
</feature>
<feature type="binding site" evidence="1">
    <location>
        <position position="168"/>
    </location>
    <ligand>
        <name>substrate</name>
    </ligand>
</feature>
<feature type="binding site" description="via carbamate group" evidence="1">
    <location>
        <position position="191"/>
    </location>
    <ligand>
        <name>Mg(2+)</name>
        <dbReference type="ChEBI" id="CHEBI:18420"/>
    </ligand>
</feature>
<feature type="binding site" evidence="1">
    <location>
        <position position="193"/>
    </location>
    <ligand>
        <name>Mg(2+)</name>
        <dbReference type="ChEBI" id="CHEBI:18420"/>
    </ligand>
</feature>
<feature type="binding site" evidence="1">
    <location>
        <position position="194"/>
    </location>
    <ligand>
        <name>Mg(2+)</name>
        <dbReference type="ChEBI" id="CHEBI:18420"/>
    </ligand>
</feature>
<feature type="binding site" evidence="1">
    <location>
        <position position="288"/>
    </location>
    <ligand>
        <name>substrate</name>
    </ligand>
</feature>
<feature type="binding site" evidence="1">
    <location>
        <position position="321"/>
    </location>
    <ligand>
        <name>substrate</name>
    </ligand>
</feature>
<feature type="binding site" evidence="1">
    <location>
        <position position="368"/>
    </location>
    <ligand>
        <name>substrate</name>
    </ligand>
</feature>
<feature type="site" description="Transition state stabilizer" evidence="1">
    <location>
        <position position="329"/>
    </location>
</feature>
<feature type="modified residue" description="N6-carboxylysine" evidence="1">
    <location>
        <position position="191"/>
    </location>
</feature>
<feature type="sequence conflict" description="In Ref. 1; AAA99178." evidence="4" ref="1">
    <original>K</original>
    <variation>S</variation>
    <location>
        <position position="459"/>
    </location>
</feature>
<accession>Q60028</accession>
<accession>Q3SFL5</accession>
<comment type="function">
    <text evidence="3">RuBisCO catalyzes two reactions: the carboxylation of D-ribulose 1,5-bisphosphate, the primary event in carbon dioxide fixation, as well as the oxidative fragmentation of the pentose substrate. Both reactions occur simultaneously and in competition at the same active site.</text>
</comment>
<comment type="catalytic activity">
    <reaction>
        <text>2 (2R)-3-phosphoglycerate + 2 H(+) = D-ribulose 1,5-bisphosphate + CO2 + H2O</text>
        <dbReference type="Rhea" id="RHEA:23124"/>
        <dbReference type="ChEBI" id="CHEBI:15377"/>
        <dbReference type="ChEBI" id="CHEBI:15378"/>
        <dbReference type="ChEBI" id="CHEBI:16526"/>
        <dbReference type="ChEBI" id="CHEBI:57870"/>
        <dbReference type="ChEBI" id="CHEBI:58272"/>
        <dbReference type="EC" id="4.1.1.39"/>
    </reaction>
</comment>
<comment type="catalytic activity">
    <reaction>
        <text>D-ribulose 1,5-bisphosphate + O2 = 2-phosphoglycolate + (2R)-3-phosphoglycerate + 2 H(+)</text>
        <dbReference type="Rhea" id="RHEA:36631"/>
        <dbReference type="ChEBI" id="CHEBI:15378"/>
        <dbReference type="ChEBI" id="CHEBI:15379"/>
        <dbReference type="ChEBI" id="CHEBI:57870"/>
        <dbReference type="ChEBI" id="CHEBI:58033"/>
        <dbReference type="ChEBI" id="CHEBI:58272"/>
    </reaction>
</comment>
<comment type="cofactor">
    <cofactor evidence="1">
        <name>Mg(2+)</name>
        <dbReference type="ChEBI" id="CHEBI:18420"/>
    </cofactor>
    <text evidence="1">Binds 1 Mg(2+) ion per subunit.</text>
</comment>
<comment type="biophysicochemical properties">
    <kinetics>
        <KM evidence="3">13.3 uM for ribulose 1,5-bisphosphate</KM>
        <KM evidence="3">256 uM for CO(2)</KM>
        <KM evidence="3">619 uM for O(2)</KM>
        <Vmax evidence="3">3.3 umol/min/mg enzyme with CO(2) as substrate</Vmax>
        <Vmax evidence="3">0.6 umol/min/mg enzyme with O(2) as substrate</Vmax>
        <text>The CO(2)/O(2) specificity factor (tau) is 14.</text>
    </kinetics>
</comment>
<comment type="subunit">
    <text evidence="2">The complex is approximately 350 kDa when isolated from either T.denitrificans or R.sphaeroides, suggesting a homohexamer or homooctamer structure.</text>
</comment>
<comment type="miscellaneous">
    <text evidence="1">The basic functional RuBisCO is composed of a large chain homodimer in a 'head-to-tail' conformation. In contrast to form I RuBisCO, the form II RuBisCO are composed solely of large subunits (By similarity).</text>
</comment>
<comment type="similarity">
    <text evidence="4">Belongs to the RuBisCO large chain family. Type II subfamily.</text>
</comment>